<dbReference type="EC" id="4.2.1.20" evidence="1"/>
<dbReference type="EMBL" id="CP000084">
    <property type="protein sequence ID" value="AAZ21309.1"/>
    <property type="molecule type" value="Genomic_DNA"/>
</dbReference>
<dbReference type="RefSeq" id="WP_011281747.1">
    <property type="nucleotide sequence ID" value="NC_007205.1"/>
</dbReference>
<dbReference type="SMR" id="Q4FND0"/>
<dbReference type="STRING" id="335992.SAR11_0487"/>
<dbReference type="GeneID" id="66294989"/>
<dbReference type="KEGG" id="pub:SAR11_0487"/>
<dbReference type="eggNOG" id="COG0159">
    <property type="taxonomic scope" value="Bacteria"/>
</dbReference>
<dbReference type="HOGENOM" id="CLU_016734_0_0_5"/>
<dbReference type="OrthoDB" id="9804578at2"/>
<dbReference type="UniPathway" id="UPA00035">
    <property type="reaction ID" value="UER00044"/>
</dbReference>
<dbReference type="Proteomes" id="UP000002528">
    <property type="component" value="Chromosome"/>
</dbReference>
<dbReference type="GO" id="GO:0005829">
    <property type="term" value="C:cytosol"/>
    <property type="evidence" value="ECO:0007669"/>
    <property type="project" value="TreeGrafter"/>
</dbReference>
<dbReference type="GO" id="GO:0004834">
    <property type="term" value="F:tryptophan synthase activity"/>
    <property type="evidence" value="ECO:0007669"/>
    <property type="project" value="UniProtKB-UniRule"/>
</dbReference>
<dbReference type="CDD" id="cd04724">
    <property type="entry name" value="Tryptophan_synthase_alpha"/>
    <property type="match status" value="1"/>
</dbReference>
<dbReference type="Gene3D" id="3.20.20.70">
    <property type="entry name" value="Aldolase class I"/>
    <property type="match status" value="1"/>
</dbReference>
<dbReference type="HAMAP" id="MF_00131">
    <property type="entry name" value="Trp_synth_alpha"/>
    <property type="match status" value="1"/>
</dbReference>
<dbReference type="InterPro" id="IPR013785">
    <property type="entry name" value="Aldolase_TIM"/>
</dbReference>
<dbReference type="InterPro" id="IPR011060">
    <property type="entry name" value="RibuloseP-bd_barrel"/>
</dbReference>
<dbReference type="InterPro" id="IPR002028">
    <property type="entry name" value="Trp_synthase_suA"/>
</dbReference>
<dbReference type="NCBIfam" id="TIGR00262">
    <property type="entry name" value="trpA"/>
    <property type="match status" value="1"/>
</dbReference>
<dbReference type="PANTHER" id="PTHR43406:SF1">
    <property type="entry name" value="TRYPTOPHAN SYNTHASE ALPHA CHAIN, CHLOROPLASTIC"/>
    <property type="match status" value="1"/>
</dbReference>
<dbReference type="PANTHER" id="PTHR43406">
    <property type="entry name" value="TRYPTOPHAN SYNTHASE, ALPHA CHAIN"/>
    <property type="match status" value="1"/>
</dbReference>
<dbReference type="Pfam" id="PF00290">
    <property type="entry name" value="Trp_syntA"/>
    <property type="match status" value="1"/>
</dbReference>
<dbReference type="SUPFAM" id="SSF51366">
    <property type="entry name" value="Ribulose-phoshate binding barrel"/>
    <property type="match status" value="1"/>
</dbReference>
<feature type="chain" id="PRO_1000018246" description="Tryptophan synthase alpha chain">
    <location>
        <begin position="1"/>
        <end position="265"/>
    </location>
</feature>
<feature type="active site" description="Proton acceptor" evidence="1">
    <location>
        <position position="48"/>
    </location>
</feature>
<feature type="active site" description="Proton acceptor" evidence="1">
    <location>
        <position position="59"/>
    </location>
</feature>
<organism>
    <name type="scientific">Pelagibacter ubique (strain HTCC1062)</name>
    <dbReference type="NCBI Taxonomy" id="335992"/>
    <lineage>
        <taxon>Bacteria</taxon>
        <taxon>Pseudomonadati</taxon>
        <taxon>Pseudomonadota</taxon>
        <taxon>Alphaproteobacteria</taxon>
        <taxon>Candidatus Pelagibacterales</taxon>
        <taxon>Candidatus Pelagibacteraceae</taxon>
        <taxon>Candidatus Pelagibacter</taxon>
    </lineage>
</organism>
<evidence type="ECO:0000255" key="1">
    <source>
        <dbReference type="HAMAP-Rule" id="MF_00131"/>
    </source>
</evidence>
<gene>
    <name evidence="1" type="primary">trpA</name>
    <name type="ordered locus">SAR11_0487</name>
</gene>
<reference key="1">
    <citation type="journal article" date="2005" name="Science">
        <title>Genome streamlining in a cosmopolitan oceanic bacterium.</title>
        <authorList>
            <person name="Giovannoni S.J."/>
            <person name="Tripp H.J."/>
            <person name="Givan S."/>
            <person name="Podar M."/>
            <person name="Vergin K.L."/>
            <person name="Baptista D."/>
            <person name="Bibbs L."/>
            <person name="Eads J."/>
            <person name="Richardson T.H."/>
            <person name="Noordewier M."/>
            <person name="Rappe M.S."/>
            <person name="Short J.M."/>
            <person name="Carrington J.C."/>
            <person name="Mathur E.J."/>
        </authorList>
    </citation>
    <scope>NUCLEOTIDE SEQUENCE [LARGE SCALE GENOMIC DNA]</scope>
    <source>
        <strain>HTCC1062</strain>
    </source>
</reference>
<sequence>MSLINLAFKKVKTEKRPALLTYTVAGDSTKKKSLEILKSIAKYADICEIGFPHNTPIADGGQIQSSAYRALKNGIKIKDVFSIVKNFKKSKQSKPVILMGYYNMIYQYGDNNFINICKKVGVDGLIVVDLPYPENKEFAKKCKKKDISFIQLVSPTTSLDRMKKIIRDSHDMVYYISMLSTTGGKLKVSPKKILERYGKIKKLNKNKNIVIGFGITEKTIASLRKADGLVVGSALCKEISNSIKKRQNPVTNVTNIVLKLRKKIS</sequence>
<protein>
    <recommendedName>
        <fullName evidence="1">Tryptophan synthase alpha chain</fullName>
        <ecNumber evidence="1">4.2.1.20</ecNumber>
    </recommendedName>
</protein>
<name>TRPA_PELUB</name>
<accession>Q4FND0</accession>
<keyword id="KW-0028">Amino-acid biosynthesis</keyword>
<keyword id="KW-0057">Aromatic amino acid biosynthesis</keyword>
<keyword id="KW-0456">Lyase</keyword>
<keyword id="KW-1185">Reference proteome</keyword>
<keyword id="KW-0822">Tryptophan biosynthesis</keyword>
<comment type="function">
    <text evidence="1">The alpha subunit is responsible for the aldol cleavage of indoleglycerol phosphate to indole and glyceraldehyde 3-phosphate.</text>
</comment>
<comment type="catalytic activity">
    <reaction evidence="1">
        <text>(1S,2R)-1-C-(indol-3-yl)glycerol 3-phosphate + L-serine = D-glyceraldehyde 3-phosphate + L-tryptophan + H2O</text>
        <dbReference type="Rhea" id="RHEA:10532"/>
        <dbReference type="ChEBI" id="CHEBI:15377"/>
        <dbReference type="ChEBI" id="CHEBI:33384"/>
        <dbReference type="ChEBI" id="CHEBI:57912"/>
        <dbReference type="ChEBI" id="CHEBI:58866"/>
        <dbReference type="ChEBI" id="CHEBI:59776"/>
        <dbReference type="EC" id="4.2.1.20"/>
    </reaction>
</comment>
<comment type="pathway">
    <text evidence="1">Amino-acid biosynthesis; L-tryptophan biosynthesis; L-tryptophan from chorismate: step 5/5.</text>
</comment>
<comment type="subunit">
    <text evidence="1">Tetramer of two alpha and two beta chains.</text>
</comment>
<comment type="similarity">
    <text evidence="1">Belongs to the TrpA family.</text>
</comment>
<proteinExistence type="inferred from homology"/>